<dbReference type="EMBL" id="CP000031">
    <property type="protein sequence ID" value="AAV96309.1"/>
    <property type="molecule type" value="Genomic_DNA"/>
</dbReference>
<dbReference type="RefSeq" id="WP_011048767.1">
    <property type="nucleotide sequence ID" value="NC_003911.12"/>
</dbReference>
<dbReference type="SMR" id="Q5LNX9"/>
<dbReference type="STRING" id="246200.SPO3074"/>
<dbReference type="PaxDb" id="246200-SPO3074"/>
<dbReference type="KEGG" id="sil:SPO3074"/>
<dbReference type="eggNOG" id="COG3175">
    <property type="taxonomic scope" value="Bacteria"/>
</dbReference>
<dbReference type="HOGENOM" id="CLU_045000_5_0_5"/>
<dbReference type="OrthoDB" id="9804841at2"/>
<dbReference type="Proteomes" id="UP000001023">
    <property type="component" value="Chromosome"/>
</dbReference>
<dbReference type="GO" id="GO:0005886">
    <property type="term" value="C:plasma membrane"/>
    <property type="evidence" value="ECO:0007669"/>
    <property type="project" value="UniProtKB-SubCell"/>
</dbReference>
<dbReference type="GO" id="GO:0005507">
    <property type="term" value="F:copper ion binding"/>
    <property type="evidence" value="ECO:0007669"/>
    <property type="project" value="InterPro"/>
</dbReference>
<dbReference type="GO" id="GO:0008535">
    <property type="term" value="P:respiratory chain complex IV assembly"/>
    <property type="evidence" value="ECO:0007669"/>
    <property type="project" value="UniProtKB-UniRule"/>
</dbReference>
<dbReference type="FunFam" id="2.60.370.10:FF:000001">
    <property type="entry name" value="COX11 cytochrome c oxidase assembly homolog"/>
    <property type="match status" value="1"/>
</dbReference>
<dbReference type="Gene3D" id="2.60.370.10">
    <property type="entry name" value="Ctag/Cox11"/>
    <property type="match status" value="1"/>
</dbReference>
<dbReference type="HAMAP" id="MF_00155">
    <property type="entry name" value="CtaG"/>
    <property type="match status" value="1"/>
</dbReference>
<dbReference type="InterPro" id="IPR023471">
    <property type="entry name" value="CtaG/Cox11_dom_sf"/>
</dbReference>
<dbReference type="InterPro" id="IPR007533">
    <property type="entry name" value="Cyt_c_oxidase_assmbl_CtaG"/>
</dbReference>
<dbReference type="NCBIfam" id="NF003465">
    <property type="entry name" value="PRK05089.1"/>
    <property type="match status" value="1"/>
</dbReference>
<dbReference type="PANTHER" id="PTHR21320:SF3">
    <property type="entry name" value="CYTOCHROME C OXIDASE ASSEMBLY PROTEIN COX11, MITOCHONDRIAL-RELATED"/>
    <property type="match status" value="1"/>
</dbReference>
<dbReference type="PANTHER" id="PTHR21320">
    <property type="entry name" value="CYTOCHROME C OXIDASE ASSEMBLY PROTEIN COX11-RELATED"/>
    <property type="match status" value="1"/>
</dbReference>
<dbReference type="Pfam" id="PF04442">
    <property type="entry name" value="CtaG_Cox11"/>
    <property type="match status" value="1"/>
</dbReference>
<dbReference type="PIRSF" id="PIRSF005413">
    <property type="entry name" value="COX11"/>
    <property type="match status" value="1"/>
</dbReference>
<dbReference type="SUPFAM" id="SSF110111">
    <property type="entry name" value="Ctag/Cox11"/>
    <property type="match status" value="1"/>
</dbReference>
<organism>
    <name type="scientific">Ruegeria pomeroyi (strain ATCC 700808 / DSM 15171 / DSS-3)</name>
    <name type="common">Silicibacter pomeroyi</name>
    <dbReference type="NCBI Taxonomy" id="246200"/>
    <lineage>
        <taxon>Bacteria</taxon>
        <taxon>Pseudomonadati</taxon>
        <taxon>Pseudomonadota</taxon>
        <taxon>Alphaproteobacteria</taxon>
        <taxon>Rhodobacterales</taxon>
        <taxon>Roseobacteraceae</taxon>
        <taxon>Ruegeria</taxon>
    </lineage>
</organism>
<evidence type="ECO:0000255" key="1">
    <source>
        <dbReference type="HAMAP-Rule" id="MF_00155"/>
    </source>
</evidence>
<keyword id="KW-0997">Cell inner membrane</keyword>
<keyword id="KW-1003">Cell membrane</keyword>
<keyword id="KW-0186">Copper</keyword>
<keyword id="KW-0472">Membrane</keyword>
<keyword id="KW-1185">Reference proteome</keyword>
<keyword id="KW-0735">Signal-anchor</keyword>
<keyword id="KW-0812">Transmembrane</keyword>
<keyword id="KW-1133">Transmembrane helix</keyword>
<feature type="chain" id="PRO_0000246144" description="Cytochrome c oxidase assembly protein CtaG">
    <location>
        <begin position="1"/>
        <end position="191"/>
    </location>
</feature>
<feature type="topological domain" description="Cytoplasmic" evidence="1">
    <location>
        <begin position="1"/>
        <end position="9"/>
    </location>
</feature>
<feature type="transmembrane region" description="Helical; Signal-anchor for type II membrane protein" evidence="1">
    <location>
        <begin position="10"/>
        <end position="30"/>
    </location>
</feature>
<feature type="topological domain" description="Periplasmic" evidence="1">
    <location>
        <begin position="31"/>
        <end position="191"/>
    </location>
</feature>
<protein>
    <recommendedName>
        <fullName evidence="1">Cytochrome c oxidase assembly protein CtaG</fullName>
    </recommendedName>
</protein>
<gene>
    <name evidence="1" type="primary">ctaG</name>
    <name type="ordered locus">SPO3074</name>
</gene>
<name>COXZ_RUEPO</name>
<reference key="1">
    <citation type="journal article" date="2004" name="Nature">
        <title>Genome sequence of Silicibacter pomeroyi reveals adaptations to the marine environment.</title>
        <authorList>
            <person name="Moran M.A."/>
            <person name="Buchan A."/>
            <person name="Gonzalez J.M."/>
            <person name="Heidelberg J.F."/>
            <person name="Whitman W.B."/>
            <person name="Kiene R.P."/>
            <person name="Henriksen J.R."/>
            <person name="King G.M."/>
            <person name="Belas R."/>
            <person name="Fuqua C."/>
            <person name="Brinkac L.M."/>
            <person name="Lewis M."/>
            <person name="Johri S."/>
            <person name="Weaver B."/>
            <person name="Pai G."/>
            <person name="Eisen J.A."/>
            <person name="Rahe E."/>
            <person name="Sheldon W.M."/>
            <person name="Ye W."/>
            <person name="Miller T.R."/>
            <person name="Carlton J."/>
            <person name="Rasko D.A."/>
            <person name="Paulsen I.T."/>
            <person name="Ren Q."/>
            <person name="Daugherty S.C."/>
            <person name="DeBoy R.T."/>
            <person name="Dodson R.J."/>
            <person name="Durkin A.S."/>
            <person name="Madupu R."/>
            <person name="Nelson W.C."/>
            <person name="Sullivan S.A."/>
            <person name="Rosovitz M.J."/>
            <person name="Haft D.H."/>
            <person name="Selengut J."/>
            <person name="Ward N."/>
        </authorList>
    </citation>
    <scope>NUCLEOTIDE SEQUENCE [LARGE SCALE GENOMIC DNA]</scope>
    <source>
        <strain>ATCC 700808 / DSM 15171 / DSS-3</strain>
    </source>
</reference>
<reference key="2">
    <citation type="journal article" date="2014" name="Stand. Genomic Sci.">
        <title>An updated genome annotation for the model marine bacterium Ruegeria pomeroyi DSS-3.</title>
        <authorList>
            <person name="Rivers A.R."/>
            <person name="Smith C.B."/>
            <person name="Moran M.A."/>
        </authorList>
    </citation>
    <scope>GENOME REANNOTATION</scope>
    <source>
        <strain>ATCC 700808 / DSM 15171 / DSS-3</strain>
    </source>
</reference>
<comment type="function">
    <text evidence="1">Exerts its effect at some terminal stage of cytochrome c oxidase synthesis, probably by being involved in the insertion of the copper B into subunit I.</text>
</comment>
<comment type="subcellular location">
    <subcellularLocation>
        <location evidence="1">Cell inner membrane</location>
        <topology evidence="1">Single-pass type II membrane protein</topology>
        <orientation evidence="1">Periplasmic side</orientation>
    </subcellularLocation>
</comment>
<comment type="similarity">
    <text evidence="1">Belongs to the COX11/CtaG family.</text>
</comment>
<sequence length="191" mass="21128">MALNGPQKTVVQLVSVVVVMGGLAWASVPFYDWFCRVTGFGGATGVAEAGSDTILDKTIKVRFDASKERGMPWEFRPVQTEMELRIGETGLAFYEAYNPTDRPVAGQASYNVAPYSAGGYFDKIACFCFEEQVLQPGERVQMPVTFFVDPEIVNDRDAKYVHTITLSYTFYEIDLPEGYAALDAGEKTNTN</sequence>
<proteinExistence type="inferred from homology"/>
<accession>Q5LNX9</accession>